<comment type="function">
    <text evidence="1">Catalyzes the reduction of the glycolytic intermediate dihydroxyacetone phosphate (DHAP) to sn-glycerol 3-phosphate (G3P), the key precursor for phospholipid synthesis.</text>
</comment>
<comment type="catalytic activity">
    <reaction evidence="1">
        <text>sn-glycerol 3-phosphate + NAD(+) = dihydroxyacetone phosphate + NADH + H(+)</text>
        <dbReference type="Rhea" id="RHEA:11092"/>
        <dbReference type="ChEBI" id="CHEBI:15378"/>
        <dbReference type="ChEBI" id="CHEBI:57540"/>
        <dbReference type="ChEBI" id="CHEBI:57597"/>
        <dbReference type="ChEBI" id="CHEBI:57642"/>
        <dbReference type="ChEBI" id="CHEBI:57945"/>
        <dbReference type="EC" id="1.1.1.94"/>
    </reaction>
    <physiologicalReaction direction="right-to-left" evidence="1">
        <dbReference type="Rhea" id="RHEA:11094"/>
    </physiologicalReaction>
</comment>
<comment type="catalytic activity">
    <reaction evidence="1">
        <text>sn-glycerol 3-phosphate + NADP(+) = dihydroxyacetone phosphate + NADPH + H(+)</text>
        <dbReference type="Rhea" id="RHEA:11096"/>
        <dbReference type="ChEBI" id="CHEBI:15378"/>
        <dbReference type="ChEBI" id="CHEBI:57597"/>
        <dbReference type="ChEBI" id="CHEBI:57642"/>
        <dbReference type="ChEBI" id="CHEBI:57783"/>
        <dbReference type="ChEBI" id="CHEBI:58349"/>
        <dbReference type="EC" id="1.1.1.94"/>
    </reaction>
    <physiologicalReaction direction="right-to-left" evidence="1">
        <dbReference type="Rhea" id="RHEA:11098"/>
    </physiologicalReaction>
</comment>
<comment type="pathway">
    <text evidence="1">Membrane lipid metabolism; glycerophospholipid metabolism.</text>
</comment>
<comment type="subcellular location">
    <subcellularLocation>
        <location evidence="1">Cytoplasm</location>
    </subcellularLocation>
</comment>
<comment type="similarity">
    <text evidence="1">Belongs to the NAD-dependent glycerol-3-phosphate dehydrogenase family.</text>
</comment>
<name>GPDA_CARHZ</name>
<keyword id="KW-0963">Cytoplasm</keyword>
<keyword id="KW-0444">Lipid biosynthesis</keyword>
<keyword id="KW-0443">Lipid metabolism</keyword>
<keyword id="KW-0520">NAD</keyword>
<keyword id="KW-0521">NADP</keyword>
<keyword id="KW-0547">Nucleotide-binding</keyword>
<keyword id="KW-0560">Oxidoreductase</keyword>
<keyword id="KW-0594">Phospholipid biosynthesis</keyword>
<keyword id="KW-1208">Phospholipid metabolism</keyword>
<keyword id="KW-1185">Reference proteome</keyword>
<protein>
    <recommendedName>
        <fullName evidence="1">Glycerol-3-phosphate dehydrogenase [NAD(P)+]</fullName>
        <ecNumber evidence="1">1.1.1.94</ecNumber>
    </recommendedName>
    <alternativeName>
        <fullName evidence="1">NAD(P)(+)-dependent glycerol-3-phosphate dehydrogenase</fullName>
    </alternativeName>
    <alternativeName>
        <fullName evidence="1">NAD(P)H-dependent dihydroxyacetone-phosphate reductase</fullName>
    </alternativeName>
</protein>
<gene>
    <name evidence="1" type="primary">gpsA</name>
    <name type="ordered locus">CHY_1917</name>
</gene>
<reference key="1">
    <citation type="journal article" date="2005" name="PLoS Genet.">
        <title>Life in hot carbon monoxide: the complete genome sequence of Carboxydothermus hydrogenoformans Z-2901.</title>
        <authorList>
            <person name="Wu M."/>
            <person name="Ren Q."/>
            <person name="Durkin A.S."/>
            <person name="Daugherty S.C."/>
            <person name="Brinkac L.M."/>
            <person name="Dodson R.J."/>
            <person name="Madupu R."/>
            <person name="Sullivan S.A."/>
            <person name="Kolonay J.F."/>
            <person name="Nelson W.C."/>
            <person name="Tallon L.J."/>
            <person name="Jones K.M."/>
            <person name="Ulrich L.E."/>
            <person name="Gonzalez J.M."/>
            <person name="Zhulin I.B."/>
            <person name="Robb F.T."/>
            <person name="Eisen J.A."/>
        </authorList>
    </citation>
    <scope>NUCLEOTIDE SEQUENCE [LARGE SCALE GENOMIC DNA]</scope>
    <source>
        <strain>ATCC BAA-161 / DSM 6008 / Z-2901</strain>
    </source>
</reference>
<proteinExistence type="inferred from homology"/>
<feature type="chain" id="PRO_0000255294" description="Glycerol-3-phosphate dehydrogenase [NAD(P)+]">
    <location>
        <begin position="1"/>
        <end position="336"/>
    </location>
</feature>
<feature type="active site" description="Proton acceptor" evidence="1">
    <location>
        <position position="193"/>
    </location>
</feature>
<feature type="binding site" evidence="1">
    <location>
        <position position="13"/>
    </location>
    <ligand>
        <name>NADPH</name>
        <dbReference type="ChEBI" id="CHEBI:57783"/>
    </ligand>
</feature>
<feature type="binding site" evidence="1">
    <location>
        <position position="14"/>
    </location>
    <ligand>
        <name>NADPH</name>
        <dbReference type="ChEBI" id="CHEBI:57783"/>
    </ligand>
</feature>
<feature type="binding site" evidence="1">
    <location>
        <position position="34"/>
    </location>
    <ligand>
        <name>NADPH</name>
        <dbReference type="ChEBI" id="CHEBI:57783"/>
    </ligand>
</feature>
<feature type="binding site" evidence="1">
    <location>
        <position position="108"/>
    </location>
    <ligand>
        <name>NADPH</name>
        <dbReference type="ChEBI" id="CHEBI:57783"/>
    </ligand>
</feature>
<feature type="binding site" evidence="1">
    <location>
        <position position="108"/>
    </location>
    <ligand>
        <name>sn-glycerol 3-phosphate</name>
        <dbReference type="ChEBI" id="CHEBI:57597"/>
    </ligand>
</feature>
<feature type="binding site" evidence="1">
    <location>
        <position position="138"/>
    </location>
    <ligand>
        <name>sn-glycerol 3-phosphate</name>
        <dbReference type="ChEBI" id="CHEBI:57597"/>
    </ligand>
</feature>
<feature type="binding site" evidence="1">
    <location>
        <position position="140"/>
    </location>
    <ligand>
        <name>sn-glycerol 3-phosphate</name>
        <dbReference type="ChEBI" id="CHEBI:57597"/>
    </ligand>
</feature>
<feature type="binding site" evidence="1">
    <location>
        <position position="142"/>
    </location>
    <ligand>
        <name>NADPH</name>
        <dbReference type="ChEBI" id="CHEBI:57783"/>
    </ligand>
</feature>
<feature type="binding site" evidence="1">
    <location>
        <position position="193"/>
    </location>
    <ligand>
        <name>sn-glycerol 3-phosphate</name>
        <dbReference type="ChEBI" id="CHEBI:57597"/>
    </ligand>
</feature>
<feature type="binding site" evidence="1">
    <location>
        <position position="246"/>
    </location>
    <ligand>
        <name>sn-glycerol 3-phosphate</name>
        <dbReference type="ChEBI" id="CHEBI:57597"/>
    </ligand>
</feature>
<feature type="binding site" evidence="1">
    <location>
        <position position="256"/>
    </location>
    <ligand>
        <name>sn-glycerol 3-phosphate</name>
        <dbReference type="ChEBI" id="CHEBI:57597"/>
    </ligand>
</feature>
<feature type="binding site" evidence="1">
    <location>
        <position position="257"/>
    </location>
    <ligand>
        <name>NADPH</name>
        <dbReference type="ChEBI" id="CHEBI:57783"/>
    </ligand>
</feature>
<feature type="binding site" evidence="1">
    <location>
        <position position="257"/>
    </location>
    <ligand>
        <name>sn-glycerol 3-phosphate</name>
        <dbReference type="ChEBI" id="CHEBI:57597"/>
    </ligand>
</feature>
<feature type="binding site" evidence="1">
    <location>
        <position position="258"/>
    </location>
    <ligand>
        <name>sn-glycerol 3-phosphate</name>
        <dbReference type="ChEBI" id="CHEBI:57597"/>
    </ligand>
</feature>
<feature type="binding site" evidence="1">
    <location>
        <position position="281"/>
    </location>
    <ligand>
        <name>NADPH</name>
        <dbReference type="ChEBI" id="CHEBI:57783"/>
    </ligand>
</feature>
<feature type="binding site" evidence="1">
    <location>
        <position position="283"/>
    </location>
    <ligand>
        <name>NADPH</name>
        <dbReference type="ChEBI" id="CHEBI:57783"/>
    </ligand>
</feature>
<accession>Q3AAU8</accession>
<dbReference type="EC" id="1.1.1.94" evidence="1"/>
<dbReference type="EMBL" id="CP000141">
    <property type="protein sequence ID" value="ABB14125.1"/>
    <property type="molecule type" value="Genomic_DNA"/>
</dbReference>
<dbReference type="SMR" id="Q3AAU8"/>
<dbReference type="FunCoup" id="Q3AAU8">
    <property type="interactions" value="369"/>
</dbReference>
<dbReference type="STRING" id="246194.CHY_1917"/>
<dbReference type="KEGG" id="chy:CHY_1917"/>
<dbReference type="eggNOG" id="COG0240">
    <property type="taxonomic scope" value="Bacteria"/>
</dbReference>
<dbReference type="HOGENOM" id="CLU_033449_0_2_9"/>
<dbReference type="InParanoid" id="Q3AAU8"/>
<dbReference type="OrthoDB" id="9812273at2"/>
<dbReference type="UniPathway" id="UPA00940"/>
<dbReference type="Proteomes" id="UP000002706">
    <property type="component" value="Chromosome"/>
</dbReference>
<dbReference type="GO" id="GO:0005829">
    <property type="term" value="C:cytosol"/>
    <property type="evidence" value="ECO:0007669"/>
    <property type="project" value="TreeGrafter"/>
</dbReference>
<dbReference type="GO" id="GO:0047952">
    <property type="term" value="F:glycerol-3-phosphate dehydrogenase [NAD(P)+] activity"/>
    <property type="evidence" value="ECO:0007669"/>
    <property type="project" value="UniProtKB-UniRule"/>
</dbReference>
<dbReference type="GO" id="GO:0051287">
    <property type="term" value="F:NAD binding"/>
    <property type="evidence" value="ECO:0007669"/>
    <property type="project" value="InterPro"/>
</dbReference>
<dbReference type="GO" id="GO:0005975">
    <property type="term" value="P:carbohydrate metabolic process"/>
    <property type="evidence" value="ECO:0007669"/>
    <property type="project" value="InterPro"/>
</dbReference>
<dbReference type="GO" id="GO:0046167">
    <property type="term" value="P:glycerol-3-phosphate biosynthetic process"/>
    <property type="evidence" value="ECO:0007669"/>
    <property type="project" value="UniProtKB-UniRule"/>
</dbReference>
<dbReference type="GO" id="GO:0046168">
    <property type="term" value="P:glycerol-3-phosphate catabolic process"/>
    <property type="evidence" value="ECO:0007669"/>
    <property type="project" value="InterPro"/>
</dbReference>
<dbReference type="GO" id="GO:0006650">
    <property type="term" value="P:glycerophospholipid metabolic process"/>
    <property type="evidence" value="ECO:0007669"/>
    <property type="project" value="UniProtKB-UniRule"/>
</dbReference>
<dbReference type="GO" id="GO:0008654">
    <property type="term" value="P:phospholipid biosynthetic process"/>
    <property type="evidence" value="ECO:0007669"/>
    <property type="project" value="UniProtKB-KW"/>
</dbReference>
<dbReference type="FunFam" id="1.10.1040.10:FF:000001">
    <property type="entry name" value="Glycerol-3-phosphate dehydrogenase [NAD(P)+]"/>
    <property type="match status" value="1"/>
</dbReference>
<dbReference type="FunFam" id="3.40.50.720:FF:000019">
    <property type="entry name" value="Glycerol-3-phosphate dehydrogenase [NAD(P)+]"/>
    <property type="match status" value="1"/>
</dbReference>
<dbReference type="Gene3D" id="1.10.1040.10">
    <property type="entry name" value="N-(1-d-carboxylethyl)-l-norvaline Dehydrogenase, domain 2"/>
    <property type="match status" value="1"/>
</dbReference>
<dbReference type="Gene3D" id="3.40.50.720">
    <property type="entry name" value="NAD(P)-binding Rossmann-like Domain"/>
    <property type="match status" value="1"/>
</dbReference>
<dbReference type="HAMAP" id="MF_00394">
    <property type="entry name" value="NAD_Glyc3P_dehydrog"/>
    <property type="match status" value="1"/>
</dbReference>
<dbReference type="InterPro" id="IPR008927">
    <property type="entry name" value="6-PGluconate_DH-like_C_sf"/>
</dbReference>
<dbReference type="InterPro" id="IPR013328">
    <property type="entry name" value="6PGD_dom2"/>
</dbReference>
<dbReference type="InterPro" id="IPR006168">
    <property type="entry name" value="G3P_DH_NAD-dep"/>
</dbReference>
<dbReference type="InterPro" id="IPR006109">
    <property type="entry name" value="G3P_DH_NAD-dep_C"/>
</dbReference>
<dbReference type="InterPro" id="IPR011128">
    <property type="entry name" value="G3P_DH_NAD-dep_N"/>
</dbReference>
<dbReference type="InterPro" id="IPR036291">
    <property type="entry name" value="NAD(P)-bd_dom_sf"/>
</dbReference>
<dbReference type="NCBIfam" id="NF000940">
    <property type="entry name" value="PRK00094.1-2"/>
    <property type="match status" value="1"/>
</dbReference>
<dbReference type="NCBIfam" id="NF000941">
    <property type="entry name" value="PRK00094.1-3"/>
    <property type="match status" value="1"/>
</dbReference>
<dbReference type="NCBIfam" id="NF000942">
    <property type="entry name" value="PRK00094.1-4"/>
    <property type="match status" value="1"/>
</dbReference>
<dbReference type="PANTHER" id="PTHR11728">
    <property type="entry name" value="GLYCEROL-3-PHOSPHATE DEHYDROGENASE"/>
    <property type="match status" value="1"/>
</dbReference>
<dbReference type="PANTHER" id="PTHR11728:SF1">
    <property type="entry name" value="GLYCEROL-3-PHOSPHATE DEHYDROGENASE [NAD(+)] 2, CHLOROPLASTIC"/>
    <property type="match status" value="1"/>
</dbReference>
<dbReference type="Pfam" id="PF07479">
    <property type="entry name" value="NAD_Gly3P_dh_C"/>
    <property type="match status" value="1"/>
</dbReference>
<dbReference type="Pfam" id="PF01210">
    <property type="entry name" value="NAD_Gly3P_dh_N"/>
    <property type="match status" value="1"/>
</dbReference>
<dbReference type="PIRSF" id="PIRSF000114">
    <property type="entry name" value="Glycerol-3-P_dh"/>
    <property type="match status" value="1"/>
</dbReference>
<dbReference type="PRINTS" id="PR00077">
    <property type="entry name" value="GPDHDRGNASE"/>
</dbReference>
<dbReference type="SUPFAM" id="SSF48179">
    <property type="entry name" value="6-phosphogluconate dehydrogenase C-terminal domain-like"/>
    <property type="match status" value="1"/>
</dbReference>
<dbReference type="SUPFAM" id="SSF51735">
    <property type="entry name" value="NAD(P)-binding Rossmann-fold domains"/>
    <property type="match status" value="1"/>
</dbReference>
<dbReference type="PROSITE" id="PS00957">
    <property type="entry name" value="NAD_G3PDH"/>
    <property type="match status" value="1"/>
</dbReference>
<organism>
    <name type="scientific">Carboxydothermus hydrogenoformans (strain ATCC BAA-161 / DSM 6008 / Z-2901)</name>
    <dbReference type="NCBI Taxonomy" id="246194"/>
    <lineage>
        <taxon>Bacteria</taxon>
        <taxon>Bacillati</taxon>
        <taxon>Bacillota</taxon>
        <taxon>Clostridia</taxon>
        <taxon>Thermoanaerobacterales</taxon>
        <taxon>Thermoanaerobacteraceae</taxon>
        <taxon>Carboxydothermus</taxon>
    </lineage>
</organism>
<sequence length="336" mass="36720">MGSIKVTVLGAGSWGTALSNLLAQKGVNTVLWGRDSAVIEEINRERENKRYLPGVKISQELIATADLEFALKDANFLVAAVPSQAFRDLLQKIKPYFKPEQILVNTAKGIEEGSLLRMSAVFTEVLPEYRDNYTILSGPSHAEEVGRGIPTAIVVSGYSPEKLYKVQELFSTEYFRVYTNDDLTGVELGGSLKNIIAIASGICTGLGLGDNTRAALVTRGLIEITRLGIKLGAKKETFMGLSGLGDLFVTAGSRHSRNYKAGILIGEGKSLEETQKEINMVVEGIRTTRAAYQLAQRLEVEMPITEALYKVLFAGLPPREGLFGLMTRAKKEELNF</sequence>
<evidence type="ECO:0000255" key="1">
    <source>
        <dbReference type="HAMAP-Rule" id="MF_00394"/>
    </source>
</evidence>